<gene>
    <name evidence="1" type="primary">coaD</name>
    <name type="ordered locus">ECP_3732</name>
</gene>
<keyword id="KW-0067">ATP-binding</keyword>
<keyword id="KW-0173">Coenzyme A biosynthesis</keyword>
<keyword id="KW-0963">Cytoplasm</keyword>
<keyword id="KW-0460">Magnesium</keyword>
<keyword id="KW-0547">Nucleotide-binding</keyword>
<keyword id="KW-0548">Nucleotidyltransferase</keyword>
<keyword id="KW-0808">Transferase</keyword>
<sequence length="159" mass="17895">MQKRAIYPGTFDPITNGHIDIVTRATQMFDHVILAIAASPSKKPMFTLEERVELAQQATAHLGNVEVVGFSDLMANFARNQHATVLIRGLRAVADFEYEMQLAHMNRHLMPELESVFLMPSKEWSFISSSLVKEVARHQGDVTHFLPENVHQALMAKLA</sequence>
<reference key="1">
    <citation type="journal article" date="2006" name="Mol. Microbiol.">
        <title>Role of pathogenicity island-associated integrases in the genome plasticity of uropathogenic Escherichia coli strain 536.</title>
        <authorList>
            <person name="Hochhut B."/>
            <person name="Wilde C."/>
            <person name="Balling G."/>
            <person name="Middendorf B."/>
            <person name="Dobrindt U."/>
            <person name="Brzuszkiewicz E."/>
            <person name="Gottschalk G."/>
            <person name="Carniel E."/>
            <person name="Hacker J."/>
        </authorList>
    </citation>
    <scope>NUCLEOTIDE SEQUENCE [LARGE SCALE GENOMIC DNA]</scope>
    <source>
        <strain>536 / UPEC</strain>
    </source>
</reference>
<protein>
    <recommendedName>
        <fullName evidence="1">Phosphopantetheine adenylyltransferase</fullName>
        <ecNumber evidence="1">2.7.7.3</ecNumber>
    </recommendedName>
    <alternativeName>
        <fullName evidence="1">Dephospho-CoA pyrophosphorylase</fullName>
    </alternativeName>
    <alternativeName>
        <fullName evidence="1">Pantetheine-phosphate adenylyltransferase</fullName>
        <shortName evidence="1">PPAT</shortName>
    </alternativeName>
</protein>
<organism>
    <name type="scientific">Escherichia coli O6:K15:H31 (strain 536 / UPEC)</name>
    <dbReference type="NCBI Taxonomy" id="362663"/>
    <lineage>
        <taxon>Bacteria</taxon>
        <taxon>Pseudomonadati</taxon>
        <taxon>Pseudomonadota</taxon>
        <taxon>Gammaproteobacteria</taxon>
        <taxon>Enterobacterales</taxon>
        <taxon>Enterobacteriaceae</taxon>
        <taxon>Escherichia</taxon>
    </lineage>
</organism>
<feature type="chain" id="PRO_1000011139" description="Phosphopantetheine adenylyltransferase">
    <location>
        <begin position="1"/>
        <end position="159"/>
    </location>
</feature>
<feature type="binding site" evidence="1">
    <location>
        <begin position="10"/>
        <end position="11"/>
    </location>
    <ligand>
        <name>ATP</name>
        <dbReference type="ChEBI" id="CHEBI:30616"/>
    </ligand>
</feature>
<feature type="binding site" evidence="1">
    <location>
        <position position="10"/>
    </location>
    <ligand>
        <name>substrate</name>
    </ligand>
</feature>
<feature type="binding site" evidence="1">
    <location>
        <position position="18"/>
    </location>
    <ligand>
        <name>ATP</name>
        <dbReference type="ChEBI" id="CHEBI:30616"/>
    </ligand>
</feature>
<feature type="binding site" evidence="1">
    <location>
        <position position="42"/>
    </location>
    <ligand>
        <name>substrate</name>
    </ligand>
</feature>
<feature type="binding site" evidence="1">
    <location>
        <position position="74"/>
    </location>
    <ligand>
        <name>substrate</name>
    </ligand>
</feature>
<feature type="binding site" evidence="1">
    <location>
        <position position="88"/>
    </location>
    <ligand>
        <name>substrate</name>
    </ligand>
</feature>
<feature type="binding site" evidence="1">
    <location>
        <begin position="89"/>
        <end position="91"/>
    </location>
    <ligand>
        <name>ATP</name>
        <dbReference type="ChEBI" id="CHEBI:30616"/>
    </ligand>
</feature>
<feature type="binding site" evidence="1">
    <location>
        <position position="99"/>
    </location>
    <ligand>
        <name>ATP</name>
        <dbReference type="ChEBI" id="CHEBI:30616"/>
    </ligand>
</feature>
<feature type="binding site" evidence="1">
    <location>
        <begin position="124"/>
        <end position="130"/>
    </location>
    <ligand>
        <name>ATP</name>
        <dbReference type="ChEBI" id="CHEBI:30616"/>
    </ligand>
</feature>
<feature type="site" description="Transition state stabilizer" evidence="1">
    <location>
        <position position="18"/>
    </location>
</feature>
<evidence type="ECO:0000255" key="1">
    <source>
        <dbReference type="HAMAP-Rule" id="MF_00151"/>
    </source>
</evidence>
<proteinExistence type="inferred from homology"/>
<comment type="function">
    <text evidence="1">Reversibly transfers an adenylyl group from ATP to 4'-phosphopantetheine, yielding dephospho-CoA (dPCoA) and pyrophosphate.</text>
</comment>
<comment type="catalytic activity">
    <reaction evidence="1">
        <text>(R)-4'-phosphopantetheine + ATP + H(+) = 3'-dephospho-CoA + diphosphate</text>
        <dbReference type="Rhea" id="RHEA:19801"/>
        <dbReference type="ChEBI" id="CHEBI:15378"/>
        <dbReference type="ChEBI" id="CHEBI:30616"/>
        <dbReference type="ChEBI" id="CHEBI:33019"/>
        <dbReference type="ChEBI" id="CHEBI:57328"/>
        <dbReference type="ChEBI" id="CHEBI:61723"/>
        <dbReference type="EC" id="2.7.7.3"/>
    </reaction>
</comment>
<comment type="cofactor">
    <cofactor evidence="1">
        <name>Mg(2+)</name>
        <dbReference type="ChEBI" id="CHEBI:18420"/>
    </cofactor>
</comment>
<comment type="pathway">
    <text evidence="1">Cofactor biosynthesis; coenzyme A biosynthesis; CoA from (R)-pantothenate: step 4/5.</text>
</comment>
<comment type="subunit">
    <text evidence="1">Homohexamer.</text>
</comment>
<comment type="subcellular location">
    <subcellularLocation>
        <location evidence="1">Cytoplasm</location>
    </subcellularLocation>
</comment>
<comment type="similarity">
    <text evidence="1">Belongs to the bacterial CoaD family.</text>
</comment>
<accession>Q0TBH5</accession>
<name>COAD_ECOL5</name>
<dbReference type="EC" id="2.7.7.3" evidence="1"/>
<dbReference type="EMBL" id="CP000247">
    <property type="protein sequence ID" value="ABG71704.1"/>
    <property type="molecule type" value="Genomic_DNA"/>
</dbReference>
<dbReference type="RefSeq" id="WP_001171873.1">
    <property type="nucleotide sequence ID" value="NC_008253.1"/>
</dbReference>
<dbReference type="SMR" id="Q0TBH5"/>
<dbReference type="GeneID" id="75173828"/>
<dbReference type="KEGG" id="ecp:ECP_3732"/>
<dbReference type="HOGENOM" id="CLU_100149_0_1_6"/>
<dbReference type="UniPathway" id="UPA00241">
    <property type="reaction ID" value="UER00355"/>
</dbReference>
<dbReference type="Proteomes" id="UP000009182">
    <property type="component" value="Chromosome"/>
</dbReference>
<dbReference type="GO" id="GO:0005737">
    <property type="term" value="C:cytoplasm"/>
    <property type="evidence" value="ECO:0007669"/>
    <property type="project" value="UniProtKB-SubCell"/>
</dbReference>
<dbReference type="GO" id="GO:0005524">
    <property type="term" value="F:ATP binding"/>
    <property type="evidence" value="ECO:0007669"/>
    <property type="project" value="UniProtKB-KW"/>
</dbReference>
<dbReference type="GO" id="GO:0004595">
    <property type="term" value="F:pantetheine-phosphate adenylyltransferase activity"/>
    <property type="evidence" value="ECO:0007669"/>
    <property type="project" value="UniProtKB-UniRule"/>
</dbReference>
<dbReference type="GO" id="GO:0015937">
    <property type="term" value="P:coenzyme A biosynthetic process"/>
    <property type="evidence" value="ECO:0007669"/>
    <property type="project" value="UniProtKB-UniRule"/>
</dbReference>
<dbReference type="CDD" id="cd02163">
    <property type="entry name" value="PPAT"/>
    <property type="match status" value="1"/>
</dbReference>
<dbReference type="FunFam" id="3.40.50.620:FF:000012">
    <property type="entry name" value="Phosphopantetheine adenylyltransferase"/>
    <property type="match status" value="1"/>
</dbReference>
<dbReference type="Gene3D" id="3.40.50.620">
    <property type="entry name" value="HUPs"/>
    <property type="match status" value="1"/>
</dbReference>
<dbReference type="HAMAP" id="MF_00151">
    <property type="entry name" value="PPAT_bact"/>
    <property type="match status" value="1"/>
</dbReference>
<dbReference type="InterPro" id="IPR004821">
    <property type="entry name" value="Cyt_trans-like"/>
</dbReference>
<dbReference type="InterPro" id="IPR001980">
    <property type="entry name" value="PPAT"/>
</dbReference>
<dbReference type="InterPro" id="IPR014729">
    <property type="entry name" value="Rossmann-like_a/b/a_fold"/>
</dbReference>
<dbReference type="NCBIfam" id="TIGR01510">
    <property type="entry name" value="coaD_prev_kdtB"/>
    <property type="match status" value="1"/>
</dbReference>
<dbReference type="NCBIfam" id="TIGR00125">
    <property type="entry name" value="cyt_tran_rel"/>
    <property type="match status" value="1"/>
</dbReference>
<dbReference type="PANTHER" id="PTHR21342">
    <property type="entry name" value="PHOSPHOPANTETHEINE ADENYLYLTRANSFERASE"/>
    <property type="match status" value="1"/>
</dbReference>
<dbReference type="PANTHER" id="PTHR21342:SF1">
    <property type="entry name" value="PHOSPHOPANTETHEINE ADENYLYLTRANSFERASE"/>
    <property type="match status" value="1"/>
</dbReference>
<dbReference type="Pfam" id="PF01467">
    <property type="entry name" value="CTP_transf_like"/>
    <property type="match status" value="1"/>
</dbReference>
<dbReference type="PRINTS" id="PR01020">
    <property type="entry name" value="LPSBIOSNTHSS"/>
</dbReference>
<dbReference type="SUPFAM" id="SSF52374">
    <property type="entry name" value="Nucleotidylyl transferase"/>
    <property type="match status" value="1"/>
</dbReference>